<name>ANDR_PAPHA</name>
<keyword id="KW-0963">Cytoplasm</keyword>
<keyword id="KW-0238">DNA-binding</keyword>
<keyword id="KW-1017">Isopeptide bond</keyword>
<keyword id="KW-0446">Lipid-binding</keyword>
<keyword id="KW-0449">Lipoprotein</keyword>
<keyword id="KW-0479">Metal-binding</keyword>
<keyword id="KW-0539">Nucleus</keyword>
<keyword id="KW-0564">Palmitate</keyword>
<keyword id="KW-0597">Phosphoprotein</keyword>
<keyword id="KW-0675">Receptor</keyword>
<keyword id="KW-0754">Steroid-binding</keyword>
<keyword id="KW-0804">Transcription</keyword>
<keyword id="KW-0805">Transcription regulation</keyword>
<keyword id="KW-0832">Ubl conjugation</keyword>
<keyword id="KW-0862">Zinc</keyword>
<keyword id="KW-0863">Zinc-finger</keyword>
<gene>
    <name type="primary">AR</name>
    <name type="synonym">NR3C4</name>
</gene>
<feature type="chain" id="PRO_0000053709" description="Androgen receptor">
    <location>
        <begin position="1"/>
        <end position="895"/>
    </location>
</feature>
<feature type="domain" description="NR LBD" evidence="6">
    <location>
        <begin position="644"/>
        <end position="875"/>
    </location>
</feature>
<feature type="DNA-binding region" description="Nuclear receptor" evidence="5">
    <location>
        <begin position="534"/>
        <end position="607"/>
    </location>
</feature>
<feature type="zinc finger region" description="NR C4-type" evidence="5">
    <location>
        <begin position="535"/>
        <end position="555"/>
    </location>
</feature>
<feature type="zinc finger region" description="NR C4-type" evidence="5">
    <location>
        <begin position="571"/>
        <end position="595"/>
    </location>
</feature>
<feature type="region of interest" description="Interaction with ZNF318" evidence="4">
    <location>
        <begin position="1"/>
        <end position="562"/>
    </location>
</feature>
<feature type="region of interest" description="Modulating" evidence="1">
    <location>
        <begin position="1"/>
        <end position="533"/>
    </location>
</feature>
<feature type="region of interest" description="Disordered" evidence="7">
    <location>
        <begin position="33"/>
        <end position="155"/>
    </location>
</feature>
<feature type="region of interest" description="Disordered" evidence="7">
    <location>
        <begin position="175"/>
        <end position="211"/>
    </location>
</feature>
<feature type="region of interest" description="Interaction with LPXN" evidence="2">
    <location>
        <begin position="527"/>
        <end position="894"/>
    </location>
</feature>
<feature type="region of interest" description="Interaction with HIPK3" evidence="3">
    <location>
        <begin position="547"/>
        <end position="637"/>
    </location>
</feature>
<feature type="region of interest" description="Interaction with CCAR1" evidence="2">
    <location>
        <begin position="567"/>
        <end position="894"/>
    </location>
</feature>
<feature type="region of interest" description="Interaction with KAT7" evidence="2">
    <location>
        <begin position="600"/>
        <end position="894"/>
    </location>
</feature>
<feature type="compositionally biased region" description="Low complexity" evidence="7">
    <location>
        <begin position="44"/>
        <end position="81"/>
    </location>
</feature>
<feature type="compositionally biased region" description="Low complexity" evidence="7">
    <location>
        <begin position="175"/>
        <end position="200"/>
    </location>
</feature>
<feature type="compositionally biased region" description="Polar residues" evidence="7">
    <location>
        <begin position="201"/>
        <end position="211"/>
    </location>
</feature>
<feature type="binding site" evidence="2">
    <location>
        <position position="681"/>
    </location>
    <ligand>
        <name>17beta-hydroxy-5alpha-androstan-3-one</name>
        <dbReference type="ChEBI" id="CHEBI:16330"/>
    </ligand>
</feature>
<feature type="binding site" evidence="2">
    <location>
        <position position="728"/>
    </location>
    <ligand>
        <name>17beta-hydroxy-5alpha-androstan-3-one</name>
        <dbReference type="ChEBI" id="CHEBI:16330"/>
    </ligand>
</feature>
<feature type="binding site" evidence="2">
    <location>
        <position position="853"/>
    </location>
    <ligand>
        <name>17beta-hydroxy-5alpha-androstan-3-one</name>
        <dbReference type="ChEBI" id="CHEBI:16330"/>
    </ligand>
</feature>
<feature type="site" description="Interaction with coactivator LXXL and FXXFY motifs" evidence="2">
    <location>
        <position position="696"/>
    </location>
</feature>
<feature type="site" description="Interaction with coactivator FXXLF and FXXFY motifs" evidence="2">
    <location>
        <position position="873"/>
    </location>
</feature>
<feature type="modified residue" description="Phosphoserine; by CDK9" evidence="2">
    <location>
        <position position="66"/>
    </location>
</feature>
<feature type="modified residue" description="Phosphoserine" evidence="2">
    <location>
        <position position="79"/>
    </location>
</feature>
<feature type="modified residue" description="Phosphotyrosine; by CSK" evidence="2">
    <location>
        <position position="208"/>
    </location>
</feature>
<feature type="modified residue" description="Phosphoserine" evidence="2">
    <location>
        <position position="241"/>
    </location>
</feature>
<feature type="modified residue" description="Phosphotyrosine; by CSK and TNK2" evidence="2">
    <location>
        <position position="252"/>
    </location>
</feature>
<feature type="modified residue" description="Phosphotyrosine; by CSK" evidence="2">
    <location>
        <position position="292"/>
    </location>
</feature>
<feature type="modified residue" description="Phosphotyrosine; by CSK" evidence="2">
    <location>
        <position position="331"/>
    </location>
</feature>
<feature type="modified residue" description="Phosphotyrosine; by CSK" evidence="2">
    <location>
        <position position="342"/>
    </location>
</feature>
<feature type="modified residue" description="Phosphotyrosine; by CSK" evidence="2">
    <location>
        <position position="347"/>
    </location>
</feature>
<feature type="modified residue" description="Phosphotyrosine; by CSK and TNK2" evidence="2">
    <location>
        <position position="348"/>
    </location>
</feature>
<feature type="modified residue" description="Phosphotyrosine; by CSK" evidence="2">
    <location>
        <position position="378"/>
    </location>
</feature>
<feature type="modified residue" description="Phosphotyrosine; by CSK" evidence="2">
    <location>
        <position position="510"/>
    </location>
</feature>
<feature type="modified residue" description="Phosphotyrosine; by CSK" evidence="2">
    <location>
        <position position="527"/>
    </location>
</feature>
<feature type="modified residue" description="Phosphoserine; by STK4/MST1" evidence="2">
    <location>
        <position position="626"/>
    </location>
</feature>
<feature type="modified residue" description="Phosphotyrosine; by CSK" evidence="2">
    <location>
        <position position="891"/>
    </location>
</feature>
<feature type="cross-link" description="Glycyl lysine isopeptide (Lys-Gly) (interchain with G-Cter in SUMO)" evidence="1">
    <location>
        <position position="371"/>
    </location>
</feature>
<feature type="cross-link" description="Glycyl lysine isopeptide (Lys-Gly) (interchain with G-Cter in SUMO)" evidence="1">
    <location>
        <position position="496"/>
    </location>
</feature>
<feature type="cross-link" description="Glycyl lysine isopeptide (Lys-Gly) (interchain with G-Cter in ubiquitin)" evidence="2">
    <location>
        <position position="821"/>
    </location>
</feature>
<feature type="cross-link" description="Glycyl lysine isopeptide (Lys-Gly) (interchain with G-Cter in ubiquitin)" evidence="2">
    <location>
        <position position="823"/>
    </location>
</feature>
<dbReference type="EMBL" id="U94176">
    <property type="protein sequence ID" value="AAC73047.1"/>
    <property type="molecule type" value="mRNA"/>
</dbReference>
<dbReference type="SMR" id="O97960"/>
<dbReference type="GO" id="GO:0000785">
    <property type="term" value="C:chromatin"/>
    <property type="evidence" value="ECO:0000250"/>
    <property type="project" value="UniProtKB"/>
</dbReference>
<dbReference type="GO" id="GO:0005737">
    <property type="term" value="C:cytoplasm"/>
    <property type="evidence" value="ECO:0000250"/>
    <property type="project" value="UniProtKB"/>
</dbReference>
<dbReference type="GO" id="GO:0005654">
    <property type="term" value="C:nucleoplasm"/>
    <property type="evidence" value="ECO:0007669"/>
    <property type="project" value="UniProtKB-ARBA"/>
</dbReference>
<dbReference type="GO" id="GO:0005634">
    <property type="term" value="C:nucleus"/>
    <property type="evidence" value="ECO:0000250"/>
    <property type="project" value="UniProtKB"/>
</dbReference>
<dbReference type="GO" id="GO:0005497">
    <property type="term" value="F:androgen binding"/>
    <property type="evidence" value="ECO:0000250"/>
    <property type="project" value="UniProtKB"/>
</dbReference>
<dbReference type="GO" id="GO:0008013">
    <property type="term" value="F:beta-catenin binding"/>
    <property type="evidence" value="ECO:0000250"/>
    <property type="project" value="UniProtKB"/>
</dbReference>
<dbReference type="GO" id="GO:0003700">
    <property type="term" value="F:DNA-binding transcription factor activity"/>
    <property type="evidence" value="ECO:0000250"/>
    <property type="project" value="UniProtKB"/>
</dbReference>
<dbReference type="GO" id="GO:0004879">
    <property type="term" value="F:nuclear receptor activity"/>
    <property type="evidence" value="ECO:0000250"/>
    <property type="project" value="UniProtKB"/>
</dbReference>
<dbReference type="GO" id="GO:0005496">
    <property type="term" value="F:steroid binding"/>
    <property type="evidence" value="ECO:0007669"/>
    <property type="project" value="UniProtKB-KW"/>
</dbReference>
<dbReference type="GO" id="GO:0000976">
    <property type="term" value="F:transcription cis-regulatory region binding"/>
    <property type="evidence" value="ECO:0000250"/>
    <property type="project" value="UniProtKB"/>
</dbReference>
<dbReference type="GO" id="GO:0008270">
    <property type="term" value="F:zinc ion binding"/>
    <property type="evidence" value="ECO:0007669"/>
    <property type="project" value="UniProtKB-KW"/>
</dbReference>
<dbReference type="GO" id="GO:0030521">
    <property type="term" value="P:androgen receptor signaling pathway"/>
    <property type="evidence" value="ECO:0000250"/>
    <property type="project" value="UniProtKB"/>
</dbReference>
<dbReference type="GO" id="GO:0030522">
    <property type="term" value="P:intracellular receptor signaling pathway"/>
    <property type="evidence" value="ECO:0000250"/>
    <property type="project" value="UniProtKB"/>
</dbReference>
<dbReference type="GO" id="GO:2001237">
    <property type="term" value="P:negative regulation of extrinsic apoptotic signaling pathway"/>
    <property type="evidence" value="ECO:0000250"/>
    <property type="project" value="UniProtKB"/>
</dbReference>
<dbReference type="GO" id="GO:0008284">
    <property type="term" value="P:positive regulation of cell population proliferation"/>
    <property type="evidence" value="ECO:0000250"/>
    <property type="project" value="UniProtKB"/>
</dbReference>
<dbReference type="GO" id="GO:0010628">
    <property type="term" value="P:positive regulation of gene expression"/>
    <property type="evidence" value="ECO:0000250"/>
    <property type="project" value="UniProtKB"/>
</dbReference>
<dbReference type="GO" id="GO:0045944">
    <property type="term" value="P:positive regulation of transcription by RNA polymerase II"/>
    <property type="evidence" value="ECO:0000250"/>
    <property type="project" value="UniProtKB"/>
</dbReference>
<dbReference type="GO" id="GO:1903076">
    <property type="term" value="P:regulation of protein localization to plasma membrane"/>
    <property type="evidence" value="ECO:0000250"/>
    <property type="project" value="UniProtKB"/>
</dbReference>
<dbReference type="CDD" id="cd07173">
    <property type="entry name" value="NR_DBD_AR"/>
    <property type="match status" value="1"/>
</dbReference>
<dbReference type="CDD" id="cd07073">
    <property type="entry name" value="NR_LBD_AR"/>
    <property type="match status" value="1"/>
</dbReference>
<dbReference type="FunFam" id="3.30.50.10:FF:000024">
    <property type="entry name" value="Androgen receptor"/>
    <property type="match status" value="1"/>
</dbReference>
<dbReference type="FunFam" id="1.10.565.10:FF:000004">
    <property type="entry name" value="Androgen receptor variant"/>
    <property type="match status" value="1"/>
</dbReference>
<dbReference type="Gene3D" id="3.30.50.10">
    <property type="entry name" value="Erythroid Transcription Factor GATA-1, subunit A"/>
    <property type="match status" value="1"/>
</dbReference>
<dbReference type="Gene3D" id="1.10.565.10">
    <property type="entry name" value="Retinoid X Receptor"/>
    <property type="match status" value="1"/>
</dbReference>
<dbReference type="InterPro" id="IPR001103">
    <property type="entry name" value="Andrgn_rcpt"/>
</dbReference>
<dbReference type="InterPro" id="IPR035500">
    <property type="entry name" value="NHR-like_dom_sf"/>
</dbReference>
<dbReference type="InterPro" id="IPR000536">
    <property type="entry name" value="Nucl_hrmn_rcpt_lig-bd"/>
</dbReference>
<dbReference type="InterPro" id="IPR050200">
    <property type="entry name" value="Nuclear_hormone_rcpt_NR3"/>
</dbReference>
<dbReference type="InterPro" id="IPR001628">
    <property type="entry name" value="Znf_hrmn_rcpt"/>
</dbReference>
<dbReference type="InterPro" id="IPR013088">
    <property type="entry name" value="Znf_NHR/GATA"/>
</dbReference>
<dbReference type="PANTHER" id="PTHR48092">
    <property type="entry name" value="KNIRPS-RELATED PROTEIN-RELATED"/>
    <property type="match status" value="1"/>
</dbReference>
<dbReference type="Pfam" id="PF02166">
    <property type="entry name" value="Androgen_recep"/>
    <property type="match status" value="1"/>
</dbReference>
<dbReference type="Pfam" id="PF00104">
    <property type="entry name" value="Hormone_recep"/>
    <property type="match status" value="1"/>
</dbReference>
<dbReference type="Pfam" id="PF00105">
    <property type="entry name" value="zf-C4"/>
    <property type="match status" value="1"/>
</dbReference>
<dbReference type="PRINTS" id="PR00521">
    <property type="entry name" value="ANDROGENR"/>
</dbReference>
<dbReference type="PRINTS" id="PR00047">
    <property type="entry name" value="STROIDFINGER"/>
</dbReference>
<dbReference type="SMART" id="SM00430">
    <property type="entry name" value="HOLI"/>
    <property type="match status" value="1"/>
</dbReference>
<dbReference type="SMART" id="SM00399">
    <property type="entry name" value="ZnF_C4"/>
    <property type="match status" value="1"/>
</dbReference>
<dbReference type="SUPFAM" id="SSF57716">
    <property type="entry name" value="Glucocorticoid receptor-like (DNA-binding domain)"/>
    <property type="match status" value="1"/>
</dbReference>
<dbReference type="SUPFAM" id="SSF48508">
    <property type="entry name" value="Nuclear receptor ligand-binding domain"/>
    <property type="match status" value="1"/>
</dbReference>
<dbReference type="PROSITE" id="PS51843">
    <property type="entry name" value="NR_LBD"/>
    <property type="match status" value="1"/>
</dbReference>
<dbReference type="PROSITE" id="PS00031">
    <property type="entry name" value="NUCLEAR_REC_DBD_1"/>
    <property type="match status" value="1"/>
</dbReference>
<dbReference type="PROSITE" id="PS51030">
    <property type="entry name" value="NUCLEAR_REC_DBD_2"/>
    <property type="match status" value="1"/>
</dbReference>
<reference key="1">
    <citation type="journal article" date="1998" name="J. Mol. Evol.">
        <title>Evolution of the primate androgen receptor: a structural basis for disease.</title>
        <authorList>
            <person name="Choong C.S."/>
            <person name="Kemppainen J.A."/>
            <person name="Wilson E.M."/>
        </authorList>
    </citation>
    <scope>NUCLEOTIDE SEQUENCE [MRNA]</scope>
</reference>
<proteinExistence type="evidence at transcript level"/>
<sequence length="895" mass="96479">MEVQLGLGRVYPRPPSKTYRGAFQNLFQSVREVIQNPGPRHPEAASAAPPGASLQQQQQQQQQETSPRQQQQQQGEDGSPQAHRRGPTGYLVLDEEQQPSQPQSAPECHPERGCVPEPGAAVAAGKGLPQQLPAPPDEDDSAAPSTLSLLGPTFPGLSSCSADLKDILSEASTMQLLQQQQQEAVSEGSSSGRAREASGAPTSSKDNYLGGTSTISDSAKELCKAVSVSMGLGVEALEHLSPGEQLRGDCMYAPVLGVPPAVRPTPCAPLAECKGSLLDDSAGKSTEDTAEYSPFKGGYTKGLEGESLGCSGSAAAGSSGTLELPSTLSLYKSGALDEAAAYQSRDYYNFPLALAGPPPPPPPPHPHARIKLENPLDYGSAWAAAAAQCRYGELASLHGAGAAGPGSGSPSAAASSSWHTLFTAEEGQLYGPCGGGGGGGGGGGGGAGEAGAVAPYGYTRPPQGLAGQEGDFTAPDVWYPGGMVSRVPYPSPTCVKSEMGPWMDSYSGPYGDMRLETARDHVLPIDYYFPPQKTCLICGDEASGCHYGALTCGSCKVFFKRAAEGKQKYLCASRNDCTIDKFRRKNCPSCRLRKCYEAGMTLGARKLKKLGNLKLQEEGEASSTTSPTEETAQKLTVSHIEGYECQPIFLNVLEAIEPGVVCAGHDNNQPDSFAALLSSLNELGERQLVHVVKWAKALPGFRNLHVDDQMAVIQYSWMGLMVFAMGWRSFTNVNSRMLYFAPDLVFNEYRMHKSRMYSQCVRMRHLSQEFGWLQITPQEFLCMKALLLFSIIPVDGLKNQKFFDELRMNYIKELDRIIACKRKNPTSCSRRFYQLTKLLDSVQPIARELHQFTFDLLIKSHMVSVDFPEMMAEIISVQVPKILSGKVKPIYFHTQ</sequence>
<accession>O97960</accession>
<protein>
    <recommendedName>
        <fullName>Androgen receptor</fullName>
    </recommendedName>
    <alternativeName>
        <fullName>Dihydrotestosterone receptor</fullName>
    </alternativeName>
    <alternativeName>
        <fullName>Nuclear receptor subfamily 3 group C member 4</fullName>
    </alternativeName>
</protein>
<evidence type="ECO:0000250" key="1"/>
<evidence type="ECO:0000250" key="2">
    <source>
        <dbReference type="UniProtKB" id="P10275"/>
    </source>
</evidence>
<evidence type="ECO:0000250" key="3">
    <source>
        <dbReference type="UniProtKB" id="P15207"/>
    </source>
</evidence>
<evidence type="ECO:0000250" key="4">
    <source>
        <dbReference type="UniProtKB" id="P19091"/>
    </source>
</evidence>
<evidence type="ECO:0000255" key="5">
    <source>
        <dbReference type="PROSITE-ProRule" id="PRU00407"/>
    </source>
</evidence>
<evidence type="ECO:0000255" key="6">
    <source>
        <dbReference type="PROSITE-ProRule" id="PRU01189"/>
    </source>
</evidence>
<evidence type="ECO:0000256" key="7">
    <source>
        <dbReference type="SAM" id="MobiDB-lite"/>
    </source>
</evidence>
<evidence type="ECO:0000305" key="8"/>
<organism>
    <name type="scientific">Papio hamadryas</name>
    <name type="common">Hamadryas baboon</name>
    <dbReference type="NCBI Taxonomy" id="9557"/>
    <lineage>
        <taxon>Eukaryota</taxon>
        <taxon>Metazoa</taxon>
        <taxon>Chordata</taxon>
        <taxon>Craniata</taxon>
        <taxon>Vertebrata</taxon>
        <taxon>Euteleostomi</taxon>
        <taxon>Mammalia</taxon>
        <taxon>Eutheria</taxon>
        <taxon>Euarchontoglires</taxon>
        <taxon>Primates</taxon>
        <taxon>Haplorrhini</taxon>
        <taxon>Catarrhini</taxon>
        <taxon>Cercopithecidae</taxon>
        <taxon>Cercopithecinae</taxon>
        <taxon>Papio</taxon>
    </lineage>
</organism>
<comment type="function">
    <text evidence="2 3">Steroid hormone receptors are ligand-activated transcription factors that regulate eukaryotic gene expression and affect cellular proliferation and differentiation in target tissues. Transcription factor activity is modulated by bound coactivator and corepressor proteins like ZBTB7A that recruits NCOR1 and NCOR2 to the androgen response elements/ARE on target genes, negatively regulating androgen receptor signaling and androgen-induced cell proliferation. Transcription activation is also down-regulated by NR0B2. Activated, but not phosphorylated, by HIPK3 and ZIPK/DAPK3.</text>
</comment>
<comment type="subunit">
    <text evidence="2 3 4">Binds DNA as a homodimer. Part of a ternary complex containing AR, EFCAB6/DJBP and PARK7. Interacts with HIPK3 and NR0B2 in the presence of androgen. The ligand binding domain interacts with KAT7/HBO1 in the presence of dihydrotestosterone. Interacts with EFCAB6/DJBP, PQBP1, RANBP9, RBAK, SPDEF, SRA1, TGFB1I1 and RREB1. Interacts with ZMIZ1/ZIMP10 and ZMIZ2/ZMIP7 which both enhance its transactivation activity. Interacts with SLC30A9 and RAD54L2/ARIP4. Interacts with MACROD1 (via macro domain) (By similarity). Interacts via the ligand-binding domain with LXXLL and FXXLF motifs from NCOA1, NCOA2, NCOA3 and MAGEA11. Interacts (via nuclear receptor DNA binding domain and nuclear receptor ligand binding domain) with NCOA4 (By similarity). The AR N-terminal poly-Gln region binds Ran resulting in enhancement of AR-mediated transactivation. Ran-binding decreases as the poly-Gln length increases. Interacts with HIP1 (via coiled coil domain). Interacts (via ligand-binding domain) with TRIM68. Interacts with TNK2. Interacts with USP26. Interacts with RNF6. Interacts (regulated by RNF6 probably through polyubiquitination) with RNF14; regulates AR transcriptional activity. Interacts with PRMT2 and TRIM24. Interacts with RACK1. Interacts with RANBP10; this interaction enhances dihydrotestosterone-induced AR transcriptional activity. Interacts with PRPF6 in a hormone-independent way; this interaction enhances dihydrotestosterone-induced AR transcriptional activity. Interacts with STK4/MST1. Interacts with ZIPK/DAPK3. Interacts with LPXN. Interacts with MAK. Part of a complex containing AR, MAK and NCOA3. Interacts with CRY1. Interacts with CCAR1 and GATA2. Interacts with ZNF318. Interacts with BUD31. Interacts with ARID4A. Interacts with ARID4B. Interacts (via NR LBD domain) with ZBTB7A; the interaction is direct and androgen-dependent (By similarity). Interacts with NCOR1 (By similarity). Interacts with NCOR2 (By similarity). Interacts with CRY2 in a ligand-dependent manner (By similarity).</text>
</comment>
<comment type="subcellular location">
    <subcellularLocation>
        <location evidence="2">Nucleus</location>
    </subcellularLocation>
    <subcellularLocation>
        <location evidence="2">Cytoplasm</location>
    </subcellularLocation>
    <text evidence="2">Detected at the promoter of target genes. Predominantly cytoplasmic in unligated form but translocates to the nucleus upon ligand-binding. Can also translocate to the nucleus in unligated form in the presence of RACK1.</text>
</comment>
<comment type="domain">
    <text evidence="1">Composed of three domains: a modulating N-terminal domain, a DNA-binding domain and a C-terminal ligand-binding domain. In the presence of bound steroid the ligand-binding domain interacts with the N-terminal modulating domain, and thereby activates AR transcription factor activity. Agonist binding is required for dimerization and binding to target DNA. The transcription factor activity of the complex formed by ligand-activated AR and DNA is modulated by interactions with coactivator and corepressor proteins. Interaction with RANBP9 is mediated by both the N-terminal domain and the DNA-binding domain. Interaction with EFCAB6/DJBP is mediated by the DNA-binding domain (By similarity).</text>
</comment>
<comment type="PTM">
    <text evidence="2">Phosphorylated in prostate cancer cells in response to several growth factors including EGF. Phosphorylation is induced by c-Src kinase (CSK). Tyr-510 is one of the major phosphorylation sites and an increase in phosphorylation and Src kinase activity is associated with prostate cancer progression (By similarity). Phosphorylation by TNK2 enhances the DNA-binding and transcriptional activity. Phosphorylation at Ser-66 by CDK9 regulates AR promoter selectivity and cell growth (By similarity).</text>
</comment>
<comment type="PTM">
    <text evidence="2">Sumoylated on Lys-371 (major) and Lys-496 (By similarity). Ubiquitinated. Deubiquitinated by USP26 (By similarity). 'Lys-6' and 'Lys-27'-linked polyubiquitination by RNF6 modulates AR transcriptional activity and specificity (By similarity).</text>
</comment>
<comment type="PTM">
    <text evidence="2">Palmitoylated by ZDHHC7 and ZDHHC21. Palmitoylation is required for plasma membrane targeting and for rapid intracellular signaling via ERK and AKT kinases and cAMP generation (By similarity).</text>
</comment>
<comment type="miscellaneous">
    <text>In the absence of ligand, steroid hormone receptors are thought to be weakly associated with nuclear components; hormone binding greatly increases receptor affinity. The hormone-receptor complex appears to recognize discrete DNA sequences upstream of transcriptional start sites.</text>
</comment>
<comment type="miscellaneous">
    <text>Transcriptional activity is enhanced by binding to RANBP9.</text>
</comment>
<comment type="similarity">
    <text evidence="8">Belongs to the nuclear hormone receptor family. NR3 subfamily.</text>
</comment>